<comment type="function">
    <text evidence="1">Binds to the 23S rRNA.</text>
</comment>
<comment type="subunit">
    <text evidence="1">Part of the 50S ribosomal subunit.</text>
</comment>
<comment type="similarity">
    <text evidence="1">Belongs to the universal ribosomal protein uL15 family.</text>
</comment>
<protein>
    <recommendedName>
        <fullName evidence="1">Large ribosomal subunit protein uL15</fullName>
    </recommendedName>
    <alternativeName>
        <fullName evidence="3">50S ribosomal protein L15</fullName>
    </alternativeName>
</protein>
<name>RL15_ECO45</name>
<proteinExistence type="inferred from homology"/>
<dbReference type="EMBL" id="CU928161">
    <property type="protein sequence ID" value="CAR04905.1"/>
    <property type="molecule type" value="Genomic_DNA"/>
</dbReference>
<dbReference type="RefSeq" id="WP_001238917.1">
    <property type="nucleotide sequence ID" value="NC_011742.1"/>
</dbReference>
<dbReference type="SMR" id="B7MCR6"/>
<dbReference type="GeneID" id="93778686"/>
<dbReference type="KEGG" id="ecz:ECS88_3688"/>
<dbReference type="HOGENOM" id="CLU_055188_4_2_6"/>
<dbReference type="Proteomes" id="UP000000747">
    <property type="component" value="Chromosome"/>
</dbReference>
<dbReference type="GO" id="GO:0022625">
    <property type="term" value="C:cytosolic large ribosomal subunit"/>
    <property type="evidence" value="ECO:0007669"/>
    <property type="project" value="TreeGrafter"/>
</dbReference>
<dbReference type="GO" id="GO:0019843">
    <property type="term" value="F:rRNA binding"/>
    <property type="evidence" value="ECO:0007669"/>
    <property type="project" value="UniProtKB-UniRule"/>
</dbReference>
<dbReference type="GO" id="GO:0003735">
    <property type="term" value="F:structural constituent of ribosome"/>
    <property type="evidence" value="ECO:0007669"/>
    <property type="project" value="InterPro"/>
</dbReference>
<dbReference type="GO" id="GO:0006412">
    <property type="term" value="P:translation"/>
    <property type="evidence" value="ECO:0007669"/>
    <property type="project" value="UniProtKB-UniRule"/>
</dbReference>
<dbReference type="FunFam" id="3.100.10.10:FF:000003">
    <property type="entry name" value="50S ribosomal protein L15"/>
    <property type="match status" value="1"/>
</dbReference>
<dbReference type="Gene3D" id="3.100.10.10">
    <property type="match status" value="1"/>
</dbReference>
<dbReference type="HAMAP" id="MF_01341">
    <property type="entry name" value="Ribosomal_uL15"/>
    <property type="match status" value="1"/>
</dbReference>
<dbReference type="InterPro" id="IPR030878">
    <property type="entry name" value="Ribosomal_uL15"/>
</dbReference>
<dbReference type="InterPro" id="IPR021131">
    <property type="entry name" value="Ribosomal_uL15/eL18"/>
</dbReference>
<dbReference type="InterPro" id="IPR036227">
    <property type="entry name" value="Ribosomal_uL15/eL18_sf"/>
</dbReference>
<dbReference type="InterPro" id="IPR005749">
    <property type="entry name" value="Ribosomal_uL15_bac-type"/>
</dbReference>
<dbReference type="InterPro" id="IPR001196">
    <property type="entry name" value="Ribosomal_uL15_CS"/>
</dbReference>
<dbReference type="NCBIfam" id="TIGR01071">
    <property type="entry name" value="rplO_bact"/>
    <property type="match status" value="1"/>
</dbReference>
<dbReference type="PANTHER" id="PTHR12934">
    <property type="entry name" value="50S RIBOSOMAL PROTEIN L15"/>
    <property type="match status" value="1"/>
</dbReference>
<dbReference type="PANTHER" id="PTHR12934:SF11">
    <property type="entry name" value="LARGE RIBOSOMAL SUBUNIT PROTEIN UL15M"/>
    <property type="match status" value="1"/>
</dbReference>
<dbReference type="Pfam" id="PF00828">
    <property type="entry name" value="Ribosomal_L27A"/>
    <property type="match status" value="1"/>
</dbReference>
<dbReference type="SUPFAM" id="SSF52080">
    <property type="entry name" value="Ribosomal proteins L15p and L18e"/>
    <property type="match status" value="1"/>
</dbReference>
<dbReference type="PROSITE" id="PS00475">
    <property type="entry name" value="RIBOSOMAL_L15"/>
    <property type="match status" value="1"/>
</dbReference>
<keyword id="KW-1185">Reference proteome</keyword>
<keyword id="KW-0687">Ribonucleoprotein</keyword>
<keyword id="KW-0689">Ribosomal protein</keyword>
<keyword id="KW-0694">RNA-binding</keyword>
<keyword id="KW-0699">rRNA-binding</keyword>
<feature type="chain" id="PRO_1000142810" description="Large ribosomal subunit protein uL15">
    <location>
        <begin position="1"/>
        <end position="144"/>
    </location>
</feature>
<feature type="region of interest" description="Disordered" evidence="2">
    <location>
        <begin position="1"/>
        <end position="54"/>
    </location>
</feature>
<feature type="compositionally biased region" description="Gly residues" evidence="2">
    <location>
        <begin position="21"/>
        <end position="31"/>
    </location>
</feature>
<organism>
    <name type="scientific">Escherichia coli O45:K1 (strain S88 / ExPEC)</name>
    <dbReference type="NCBI Taxonomy" id="585035"/>
    <lineage>
        <taxon>Bacteria</taxon>
        <taxon>Pseudomonadati</taxon>
        <taxon>Pseudomonadota</taxon>
        <taxon>Gammaproteobacteria</taxon>
        <taxon>Enterobacterales</taxon>
        <taxon>Enterobacteriaceae</taxon>
        <taxon>Escherichia</taxon>
    </lineage>
</organism>
<reference key="1">
    <citation type="journal article" date="2009" name="PLoS Genet.">
        <title>Organised genome dynamics in the Escherichia coli species results in highly diverse adaptive paths.</title>
        <authorList>
            <person name="Touchon M."/>
            <person name="Hoede C."/>
            <person name="Tenaillon O."/>
            <person name="Barbe V."/>
            <person name="Baeriswyl S."/>
            <person name="Bidet P."/>
            <person name="Bingen E."/>
            <person name="Bonacorsi S."/>
            <person name="Bouchier C."/>
            <person name="Bouvet O."/>
            <person name="Calteau A."/>
            <person name="Chiapello H."/>
            <person name="Clermont O."/>
            <person name="Cruveiller S."/>
            <person name="Danchin A."/>
            <person name="Diard M."/>
            <person name="Dossat C."/>
            <person name="Karoui M.E."/>
            <person name="Frapy E."/>
            <person name="Garry L."/>
            <person name="Ghigo J.M."/>
            <person name="Gilles A.M."/>
            <person name="Johnson J."/>
            <person name="Le Bouguenec C."/>
            <person name="Lescat M."/>
            <person name="Mangenot S."/>
            <person name="Martinez-Jehanne V."/>
            <person name="Matic I."/>
            <person name="Nassif X."/>
            <person name="Oztas S."/>
            <person name="Petit M.A."/>
            <person name="Pichon C."/>
            <person name="Rouy Z."/>
            <person name="Ruf C.S."/>
            <person name="Schneider D."/>
            <person name="Tourret J."/>
            <person name="Vacherie B."/>
            <person name="Vallenet D."/>
            <person name="Medigue C."/>
            <person name="Rocha E.P.C."/>
            <person name="Denamur E."/>
        </authorList>
    </citation>
    <scope>NUCLEOTIDE SEQUENCE [LARGE SCALE GENOMIC DNA]</scope>
    <source>
        <strain>S88 / ExPEC</strain>
    </source>
</reference>
<sequence>MRLNTLSPAEGSKKAGKRLGRGIGSGLGKTGGRGHKGQKSRSGGGVRRGFEGGQMPLYRRLPKFGFTSRKAAITAEVRLSDLAKVEGGVVDLNTLKAANIIGIQIEFAKVILAGEVTTPVTVRGLRVTKGARAAIEAAGGKIEE</sequence>
<gene>
    <name evidence="1" type="primary">rplO</name>
    <name type="ordered locus">ECS88_3688</name>
</gene>
<evidence type="ECO:0000255" key="1">
    <source>
        <dbReference type="HAMAP-Rule" id="MF_01341"/>
    </source>
</evidence>
<evidence type="ECO:0000256" key="2">
    <source>
        <dbReference type="SAM" id="MobiDB-lite"/>
    </source>
</evidence>
<evidence type="ECO:0000305" key="3"/>
<accession>B7MCR6</accession>